<reference key="1">
    <citation type="journal article" date="2004" name="Proc. Natl. Acad. Sci. U.S.A.">
        <title>Insights into the evolution of Yersinia pestis through whole-genome comparison with Yersinia pseudotuberculosis.</title>
        <authorList>
            <person name="Chain P.S.G."/>
            <person name="Carniel E."/>
            <person name="Larimer F.W."/>
            <person name="Lamerdin J."/>
            <person name="Stoutland P.O."/>
            <person name="Regala W.M."/>
            <person name="Georgescu A.M."/>
            <person name="Vergez L.M."/>
            <person name="Land M.L."/>
            <person name="Motin V.L."/>
            <person name="Brubaker R.R."/>
            <person name="Fowler J."/>
            <person name="Hinnebusch J."/>
            <person name="Marceau M."/>
            <person name="Medigue C."/>
            <person name="Simonet M."/>
            <person name="Chenal-Francisque V."/>
            <person name="Souza B."/>
            <person name="Dacheux D."/>
            <person name="Elliott J.M."/>
            <person name="Derbise A."/>
            <person name="Hauser L.J."/>
            <person name="Garcia E."/>
        </authorList>
    </citation>
    <scope>NUCLEOTIDE SEQUENCE [LARGE SCALE GENOMIC DNA]</scope>
    <source>
        <strain>IP32953</strain>
    </source>
</reference>
<comment type="function">
    <text evidence="1">Part of the ABC transporter complex XylFGH involved in xylose import. Responsible for energy coupling to the transport system.</text>
</comment>
<comment type="catalytic activity">
    <reaction evidence="1">
        <text>D-xylose(out) + ATP + H2O = D-xylose(in) + ADP + phosphate + H(+)</text>
        <dbReference type="Rhea" id="RHEA:29899"/>
        <dbReference type="ChEBI" id="CHEBI:15377"/>
        <dbReference type="ChEBI" id="CHEBI:15378"/>
        <dbReference type="ChEBI" id="CHEBI:30616"/>
        <dbReference type="ChEBI" id="CHEBI:43474"/>
        <dbReference type="ChEBI" id="CHEBI:53455"/>
        <dbReference type="ChEBI" id="CHEBI:456216"/>
        <dbReference type="EC" id="7.5.2.10"/>
    </reaction>
</comment>
<comment type="subunit">
    <text evidence="1">The complex is composed of two ATP-binding proteins (XylG), two transmembrane proteins (XylH) and a solute-binding protein (XylF).</text>
</comment>
<comment type="subcellular location">
    <subcellularLocation>
        <location evidence="1">Cell inner membrane</location>
        <topology evidence="1">Peripheral membrane protein</topology>
    </subcellularLocation>
</comment>
<comment type="similarity">
    <text evidence="1">Belongs to the ABC transporter superfamily. Xylose importer (TC 3.A.1.2.4) family.</text>
</comment>
<evidence type="ECO:0000255" key="1">
    <source>
        <dbReference type="HAMAP-Rule" id="MF_01722"/>
    </source>
</evidence>
<proteinExistence type="inferred from homology"/>
<gene>
    <name evidence="1" type="primary">xylG</name>
    <name type="ordered locus">YPTB3889</name>
</gene>
<organism>
    <name type="scientific">Yersinia pseudotuberculosis serotype I (strain IP32953)</name>
    <dbReference type="NCBI Taxonomy" id="273123"/>
    <lineage>
        <taxon>Bacteria</taxon>
        <taxon>Pseudomonadati</taxon>
        <taxon>Pseudomonadota</taxon>
        <taxon>Gammaproteobacteria</taxon>
        <taxon>Enterobacterales</taxon>
        <taxon>Yersiniaceae</taxon>
        <taxon>Yersinia</taxon>
    </lineage>
</organism>
<name>XYLG_YERPS</name>
<dbReference type="EC" id="7.5.2.10" evidence="1"/>
<dbReference type="EMBL" id="BX936398">
    <property type="protein sequence ID" value="CAH23127.1"/>
    <property type="molecule type" value="Genomic_DNA"/>
</dbReference>
<dbReference type="RefSeq" id="WP_002209590.1">
    <property type="nucleotide sequence ID" value="NZ_CP009712.1"/>
</dbReference>
<dbReference type="SMR" id="Q663Y5"/>
<dbReference type="KEGG" id="ypo:BZ17_2692"/>
<dbReference type="KEGG" id="yps:YPTB3889"/>
<dbReference type="PATRIC" id="fig|273123.14.peg.2823"/>
<dbReference type="Proteomes" id="UP000001011">
    <property type="component" value="Chromosome"/>
</dbReference>
<dbReference type="GO" id="GO:0005886">
    <property type="term" value="C:plasma membrane"/>
    <property type="evidence" value="ECO:0007669"/>
    <property type="project" value="UniProtKB-SubCell"/>
</dbReference>
<dbReference type="GO" id="GO:0015614">
    <property type="term" value="F:ABC-type D-xylose transporter activity"/>
    <property type="evidence" value="ECO:0007669"/>
    <property type="project" value="UniProtKB-EC"/>
</dbReference>
<dbReference type="GO" id="GO:0005524">
    <property type="term" value="F:ATP binding"/>
    <property type="evidence" value="ECO:0007669"/>
    <property type="project" value="UniProtKB-KW"/>
</dbReference>
<dbReference type="GO" id="GO:0016887">
    <property type="term" value="F:ATP hydrolysis activity"/>
    <property type="evidence" value="ECO:0007669"/>
    <property type="project" value="InterPro"/>
</dbReference>
<dbReference type="CDD" id="cd03216">
    <property type="entry name" value="ABC_Carb_Monos_I"/>
    <property type="match status" value="1"/>
</dbReference>
<dbReference type="CDD" id="cd03215">
    <property type="entry name" value="ABC_Carb_Monos_II"/>
    <property type="match status" value="1"/>
</dbReference>
<dbReference type="FunFam" id="3.40.50.300:FF:000126">
    <property type="entry name" value="Galactose/methyl galactoside import ATP-binding protein MglA"/>
    <property type="match status" value="1"/>
</dbReference>
<dbReference type="FunFam" id="3.40.50.300:FF:000127">
    <property type="entry name" value="Ribose import ATP-binding protein RbsA"/>
    <property type="match status" value="1"/>
</dbReference>
<dbReference type="Gene3D" id="3.40.50.300">
    <property type="entry name" value="P-loop containing nucleotide triphosphate hydrolases"/>
    <property type="match status" value="2"/>
</dbReference>
<dbReference type="InterPro" id="IPR003593">
    <property type="entry name" value="AAA+_ATPase"/>
</dbReference>
<dbReference type="InterPro" id="IPR050107">
    <property type="entry name" value="ABC_carbohydrate_import_ATPase"/>
</dbReference>
<dbReference type="InterPro" id="IPR003439">
    <property type="entry name" value="ABC_transporter-like_ATP-bd"/>
</dbReference>
<dbReference type="InterPro" id="IPR017871">
    <property type="entry name" value="ABC_transporter-like_CS"/>
</dbReference>
<dbReference type="InterPro" id="IPR013455">
    <property type="entry name" value="ABC_transptr_XylG"/>
</dbReference>
<dbReference type="InterPro" id="IPR027417">
    <property type="entry name" value="P-loop_NTPase"/>
</dbReference>
<dbReference type="NCBIfam" id="NF010069">
    <property type="entry name" value="PRK13549.1"/>
    <property type="match status" value="1"/>
</dbReference>
<dbReference type="NCBIfam" id="TIGR02633">
    <property type="entry name" value="xylG"/>
    <property type="match status" value="1"/>
</dbReference>
<dbReference type="PANTHER" id="PTHR43790">
    <property type="entry name" value="CARBOHYDRATE TRANSPORT ATP-BINDING PROTEIN MG119-RELATED"/>
    <property type="match status" value="1"/>
</dbReference>
<dbReference type="PANTHER" id="PTHR43790:SF1">
    <property type="entry name" value="XYLOSE IMPORT ATP-BINDING PROTEIN XYLG"/>
    <property type="match status" value="1"/>
</dbReference>
<dbReference type="Pfam" id="PF00005">
    <property type="entry name" value="ABC_tran"/>
    <property type="match status" value="2"/>
</dbReference>
<dbReference type="SMART" id="SM00382">
    <property type="entry name" value="AAA"/>
    <property type="match status" value="2"/>
</dbReference>
<dbReference type="SUPFAM" id="SSF52540">
    <property type="entry name" value="P-loop containing nucleoside triphosphate hydrolases"/>
    <property type="match status" value="2"/>
</dbReference>
<dbReference type="PROSITE" id="PS00211">
    <property type="entry name" value="ABC_TRANSPORTER_1"/>
    <property type="match status" value="1"/>
</dbReference>
<dbReference type="PROSITE" id="PS50893">
    <property type="entry name" value="ABC_TRANSPORTER_2"/>
    <property type="match status" value="2"/>
</dbReference>
<dbReference type="PROSITE" id="PS51280">
    <property type="entry name" value="XYLG"/>
    <property type="match status" value="1"/>
</dbReference>
<sequence>MPYLLEMKDITKQFGVVKAVDNISLTLEAGQVLSLCGENGSGKSTLMKVLCGIYPVGSYQGEIIFSGETLQAKNIRETEQKGIAIIHQELALVKQMSVLENMFLGSEWGRFGIMDYDAMYLRCQRMLAQVKLVVDPHTPVSELGLGQQQLVEIAKALNKQVRLLVLDEPTASLTESETAILLDIIRDLRNHGIACIYISHKLNEVKEISDHICVIRDGRHIGTRPASTMSEDDIIAMMVGRELKELYPHEAHHIGEEILRVENLCAWHPVNRHIRRVDDVSFSLKRGEILGIAGLVGSGRTETVQCLFGVYPGRWQGDIFIKGQAATIRTCQQAMKLGIAMVPEDRKKDGIVPVMGVGANITLAALDDFTGAFSLLDDAKEQSIIVQSLARLKVKTSSSELAIARLSGGNQQKAILAKCLLLNPQILILDEPTRGIDIGAKYEIYKLINQLVQQGIAVIVISSELPEVLGLSDRVLVMHQGRIKADLINHNLTQEKVMEAALRSETHVTS</sequence>
<accession>Q663Y5</accession>
<keyword id="KW-0067">ATP-binding</keyword>
<keyword id="KW-0997">Cell inner membrane</keyword>
<keyword id="KW-1003">Cell membrane</keyword>
<keyword id="KW-0472">Membrane</keyword>
<keyword id="KW-0547">Nucleotide-binding</keyword>
<keyword id="KW-0677">Repeat</keyword>
<keyword id="KW-0762">Sugar transport</keyword>
<keyword id="KW-1278">Translocase</keyword>
<keyword id="KW-0813">Transport</keyword>
<feature type="chain" id="PRO_0000271521" description="Xylose import ATP-binding protein XylG">
    <location>
        <begin position="1"/>
        <end position="510"/>
    </location>
</feature>
<feature type="domain" description="ABC transporter 1" evidence="1">
    <location>
        <begin position="5"/>
        <end position="242"/>
    </location>
</feature>
<feature type="domain" description="ABC transporter 2" evidence="1">
    <location>
        <begin position="259"/>
        <end position="505"/>
    </location>
</feature>
<feature type="binding site" evidence="1">
    <location>
        <begin position="37"/>
        <end position="44"/>
    </location>
    <ligand>
        <name>ATP</name>
        <dbReference type="ChEBI" id="CHEBI:30616"/>
    </ligand>
</feature>
<protein>
    <recommendedName>
        <fullName evidence="1">Xylose import ATP-binding protein XylG</fullName>
        <ecNumber evidence="1">7.5.2.10</ecNumber>
    </recommendedName>
</protein>